<gene>
    <name evidence="1" type="primary">rpoC</name>
    <name type="ordered locus">GOX0385</name>
</gene>
<protein>
    <recommendedName>
        <fullName evidence="1">DNA-directed RNA polymerase subunit beta'</fullName>
        <shortName evidence="1">RNAP subunit beta'</shortName>
        <ecNumber evidence="1">2.7.7.6</ecNumber>
    </recommendedName>
    <alternativeName>
        <fullName evidence="1">RNA polymerase subunit beta'</fullName>
    </alternativeName>
    <alternativeName>
        <fullName evidence="1">Transcriptase subunit beta'</fullName>
    </alternativeName>
</protein>
<keyword id="KW-0240">DNA-directed RNA polymerase</keyword>
<keyword id="KW-0460">Magnesium</keyword>
<keyword id="KW-0479">Metal-binding</keyword>
<keyword id="KW-0548">Nucleotidyltransferase</keyword>
<keyword id="KW-1185">Reference proteome</keyword>
<keyword id="KW-0804">Transcription</keyword>
<keyword id="KW-0808">Transferase</keyword>
<keyword id="KW-0862">Zinc</keyword>
<dbReference type="EC" id="2.7.7.6" evidence="1"/>
<dbReference type="EMBL" id="CP000009">
    <property type="protein sequence ID" value="AAW60168.1"/>
    <property type="molecule type" value="Genomic_DNA"/>
</dbReference>
<dbReference type="RefSeq" id="WP_011251970.1">
    <property type="nucleotide sequence ID" value="NC_006677.1"/>
</dbReference>
<dbReference type="SMR" id="Q5FTX8"/>
<dbReference type="STRING" id="290633.GOX0385"/>
<dbReference type="KEGG" id="gox:GOX0385"/>
<dbReference type="eggNOG" id="COG0086">
    <property type="taxonomic scope" value="Bacteria"/>
</dbReference>
<dbReference type="HOGENOM" id="CLU_000524_3_1_5"/>
<dbReference type="Proteomes" id="UP000006375">
    <property type="component" value="Chromosome"/>
</dbReference>
<dbReference type="GO" id="GO:0000428">
    <property type="term" value="C:DNA-directed RNA polymerase complex"/>
    <property type="evidence" value="ECO:0007669"/>
    <property type="project" value="UniProtKB-KW"/>
</dbReference>
<dbReference type="GO" id="GO:0003677">
    <property type="term" value="F:DNA binding"/>
    <property type="evidence" value="ECO:0007669"/>
    <property type="project" value="UniProtKB-UniRule"/>
</dbReference>
<dbReference type="GO" id="GO:0003899">
    <property type="term" value="F:DNA-directed RNA polymerase activity"/>
    <property type="evidence" value="ECO:0007669"/>
    <property type="project" value="UniProtKB-UniRule"/>
</dbReference>
<dbReference type="GO" id="GO:0000287">
    <property type="term" value="F:magnesium ion binding"/>
    <property type="evidence" value="ECO:0007669"/>
    <property type="project" value="UniProtKB-UniRule"/>
</dbReference>
<dbReference type="GO" id="GO:0008270">
    <property type="term" value="F:zinc ion binding"/>
    <property type="evidence" value="ECO:0007669"/>
    <property type="project" value="UniProtKB-UniRule"/>
</dbReference>
<dbReference type="GO" id="GO:0006351">
    <property type="term" value="P:DNA-templated transcription"/>
    <property type="evidence" value="ECO:0007669"/>
    <property type="project" value="UniProtKB-UniRule"/>
</dbReference>
<dbReference type="CDD" id="cd02655">
    <property type="entry name" value="RNAP_beta'_C"/>
    <property type="match status" value="1"/>
</dbReference>
<dbReference type="CDD" id="cd01609">
    <property type="entry name" value="RNAP_beta'_N"/>
    <property type="match status" value="1"/>
</dbReference>
<dbReference type="FunFam" id="1.10.40.90:FF:000001">
    <property type="entry name" value="DNA-directed RNA polymerase subunit beta"/>
    <property type="match status" value="1"/>
</dbReference>
<dbReference type="Gene3D" id="1.10.132.30">
    <property type="match status" value="1"/>
</dbReference>
<dbReference type="Gene3D" id="1.10.150.390">
    <property type="match status" value="1"/>
</dbReference>
<dbReference type="Gene3D" id="1.10.1790.20">
    <property type="match status" value="1"/>
</dbReference>
<dbReference type="Gene3D" id="1.10.40.90">
    <property type="match status" value="1"/>
</dbReference>
<dbReference type="Gene3D" id="2.40.40.20">
    <property type="match status" value="1"/>
</dbReference>
<dbReference type="Gene3D" id="2.40.50.100">
    <property type="match status" value="3"/>
</dbReference>
<dbReference type="Gene3D" id="4.10.860.120">
    <property type="entry name" value="RNA polymerase II, clamp domain"/>
    <property type="match status" value="1"/>
</dbReference>
<dbReference type="Gene3D" id="1.10.274.100">
    <property type="entry name" value="RNA polymerase Rpb1, domain 3"/>
    <property type="match status" value="2"/>
</dbReference>
<dbReference type="HAMAP" id="MF_01322">
    <property type="entry name" value="RNApol_bact_RpoC"/>
    <property type="match status" value="1"/>
</dbReference>
<dbReference type="InterPro" id="IPR045867">
    <property type="entry name" value="DNA-dir_RpoC_beta_prime"/>
</dbReference>
<dbReference type="InterPro" id="IPR012754">
    <property type="entry name" value="DNA-dir_RpoC_beta_prime_bact"/>
</dbReference>
<dbReference type="InterPro" id="IPR000722">
    <property type="entry name" value="RNA_pol_asu"/>
</dbReference>
<dbReference type="InterPro" id="IPR006592">
    <property type="entry name" value="RNA_pol_N"/>
</dbReference>
<dbReference type="InterPro" id="IPR007080">
    <property type="entry name" value="RNA_pol_Rpb1_1"/>
</dbReference>
<dbReference type="InterPro" id="IPR007066">
    <property type="entry name" value="RNA_pol_Rpb1_3"/>
</dbReference>
<dbReference type="InterPro" id="IPR042102">
    <property type="entry name" value="RNA_pol_Rpb1_3_sf"/>
</dbReference>
<dbReference type="InterPro" id="IPR007083">
    <property type="entry name" value="RNA_pol_Rpb1_4"/>
</dbReference>
<dbReference type="InterPro" id="IPR007081">
    <property type="entry name" value="RNA_pol_Rpb1_5"/>
</dbReference>
<dbReference type="InterPro" id="IPR044893">
    <property type="entry name" value="RNA_pol_Rpb1_clamp_domain"/>
</dbReference>
<dbReference type="InterPro" id="IPR038120">
    <property type="entry name" value="Rpb1_funnel_sf"/>
</dbReference>
<dbReference type="NCBIfam" id="TIGR02386">
    <property type="entry name" value="rpoC_TIGR"/>
    <property type="match status" value="1"/>
</dbReference>
<dbReference type="PANTHER" id="PTHR19376">
    <property type="entry name" value="DNA-DIRECTED RNA POLYMERASE"/>
    <property type="match status" value="1"/>
</dbReference>
<dbReference type="PANTHER" id="PTHR19376:SF54">
    <property type="entry name" value="DNA-DIRECTED RNA POLYMERASE SUBUNIT BETA"/>
    <property type="match status" value="1"/>
</dbReference>
<dbReference type="Pfam" id="PF04997">
    <property type="entry name" value="RNA_pol_Rpb1_1"/>
    <property type="match status" value="1"/>
</dbReference>
<dbReference type="Pfam" id="PF00623">
    <property type="entry name" value="RNA_pol_Rpb1_2"/>
    <property type="match status" value="2"/>
</dbReference>
<dbReference type="Pfam" id="PF04983">
    <property type="entry name" value="RNA_pol_Rpb1_3"/>
    <property type="match status" value="1"/>
</dbReference>
<dbReference type="Pfam" id="PF05000">
    <property type="entry name" value="RNA_pol_Rpb1_4"/>
    <property type="match status" value="1"/>
</dbReference>
<dbReference type="Pfam" id="PF04998">
    <property type="entry name" value="RNA_pol_Rpb1_5"/>
    <property type="match status" value="1"/>
</dbReference>
<dbReference type="SMART" id="SM00663">
    <property type="entry name" value="RPOLA_N"/>
    <property type="match status" value="1"/>
</dbReference>
<dbReference type="SUPFAM" id="SSF64484">
    <property type="entry name" value="beta and beta-prime subunits of DNA dependent RNA-polymerase"/>
    <property type="match status" value="1"/>
</dbReference>
<reference key="1">
    <citation type="journal article" date="2005" name="Nat. Biotechnol.">
        <title>Complete genome sequence of the acetic acid bacterium Gluconobacter oxydans.</title>
        <authorList>
            <person name="Prust C."/>
            <person name="Hoffmeister M."/>
            <person name="Liesegang H."/>
            <person name="Wiezer A."/>
            <person name="Fricke W.F."/>
            <person name="Ehrenreich A."/>
            <person name="Gottschalk G."/>
            <person name="Deppenmeier U."/>
        </authorList>
    </citation>
    <scope>NUCLEOTIDE SEQUENCE [LARGE SCALE GENOMIC DNA]</scope>
    <source>
        <strain>621H</strain>
    </source>
</reference>
<proteinExistence type="inferred from homology"/>
<name>RPOC_GLUOX</name>
<feature type="chain" id="PRO_0000225539" description="DNA-directed RNA polymerase subunit beta'">
    <location>
        <begin position="1"/>
        <end position="1439"/>
    </location>
</feature>
<feature type="binding site" evidence="1">
    <location>
        <position position="70"/>
    </location>
    <ligand>
        <name>Zn(2+)</name>
        <dbReference type="ChEBI" id="CHEBI:29105"/>
        <label>1</label>
    </ligand>
</feature>
<feature type="binding site" evidence="1">
    <location>
        <position position="72"/>
    </location>
    <ligand>
        <name>Zn(2+)</name>
        <dbReference type="ChEBI" id="CHEBI:29105"/>
        <label>1</label>
    </ligand>
</feature>
<feature type="binding site" evidence="1">
    <location>
        <position position="85"/>
    </location>
    <ligand>
        <name>Zn(2+)</name>
        <dbReference type="ChEBI" id="CHEBI:29105"/>
        <label>1</label>
    </ligand>
</feature>
<feature type="binding site" evidence="1">
    <location>
        <position position="88"/>
    </location>
    <ligand>
        <name>Zn(2+)</name>
        <dbReference type="ChEBI" id="CHEBI:29105"/>
        <label>1</label>
    </ligand>
</feature>
<feature type="binding site" evidence="1">
    <location>
        <position position="504"/>
    </location>
    <ligand>
        <name>Mg(2+)</name>
        <dbReference type="ChEBI" id="CHEBI:18420"/>
    </ligand>
</feature>
<feature type="binding site" evidence="1">
    <location>
        <position position="506"/>
    </location>
    <ligand>
        <name>Mg(2+)</name>
        <dbReference type="ChEBI" id="CHEBI:18420"/>
    </ligand>
</feature>
<feature type="binding site" evidence="1">
    <location>
        <position position="508"/>
    </location>
    <ligand>
        <name>Mg(2+)</name>
        <dbReference type="ChEBI" id="CHEBI:18420"/>
    </ligand>
</feature>
<feature type="binding site" evidence="1">
    <location>
        <position position="862"/>
    </location>
    <ligand>
        <name>Zn(2+)</name>
        <dbReference type="ChEBI" id="CHEBI:29105"/>
        <label>2</label>
    </ligand>
</feature>
<feature type="binding site" evidence="1">
    <location>
        <position position="936"/>
    </location>
    <ligand>
        <name>Zn(2+)</name>
        <dbReference type="ChEBI" id="CHEBI:29105"/>
        <label>2</label>
    </ligand>
</feature>
<feature type="binding site" evidence="1">
    <location>
        <position position="943"/>
    </location>
    <ligand>
        <name>Zn(2+)</name>
        <dbReference type="ChEBI" id="CHEBI:29105"/>
        <label>2</label>
    </ligand>
</feature>
<feature type="binding site" evidence="1">
    <location>
        <position position="946"/>
    </location>
    <ligand>
        <name>Zn(2+)</name>
        <dbReference type="ChEBI" id="CHEBI:29105"/>
        <label>2</label>
    </ligand>
</feature>
<accession>Q5FTX8</accession>
<sequence length="1439" mass="159527">MNELMKILGQTGQSVTFDQIKIQLASSEQVRSWSYGEIKKPETINYRTFKPERDGLFCARIFGPIKDYECLCGKYKRMKFRGIVCEKCGVEVTLAKVRRERMGHIELASPVAHIWFLKSLPSRIATMLDLPLKDVEPVLYFEKFLVLDKGVCESDQIDSYKNGKKRDQYLLDEIRCEDLLDEYPDAGIDVGIGAEAIKRALSSYDWGIPNDQERELSLAAKEKGLPDPFDYDADVMEGDSEKTMMRKKLRKATSEAARKKLVKRLKLVEAFVESGSRPDWMIMDIVPVIPPELRPLVPLDGGRFATSDLNDLYRRVINRNNRLKRLIELRAPDIIVRNEKRMLQEAVDALFDNGRRGRAITGANKRPLKSLSDMLKGKQGRFRQNLLGKRVDYSGRSVIVVGPELKLHQCGLPKKMALELFKPFIYSKLEKYGHATTIKAAKRMVEKERPEVWDILEEVIREHPVMLNRAPTLHRLGIQAFEPTLIEGKAIQLHPLVCTAFNADFDGDQMAVHVPLSLEAQLEARVLMMSTNNILSPANGKPIIVPSQDIVLGLYYLSLEVPEYRETPDEAVIKDGKIVTAAPPAYSDVAEIESAMLSGSLKLHDKIRLRLPTIDAEGKSVRQTILTTPGRALIAQILPKHQAIPFSLVNKQLTKKNVSDVIDTVYRHCGQKEAVIFCDRLMGLGFRHAARAGISFGKDDMIIPEAKATLVGKTSEEVKEFEQQYQDGLITAGERYNKVVDAWSRCTDEVQAAMLKEISKQVIGKPTNSVWMMSHSGARGSPAQMKQLAGMRGLMVKPSGEIIEQPIIANFKEGLSVLDYFTSSHGARKGLADTALKTANSGYLTRRLVDVAQDCIIVEPDCGTERGLTVRAVMDSGEVVASLSERILGRTLSKDVIHPVTQDVILPRNTLIEEAEAELIEKAGVESVDIRSVLTCDSRVGICAHCYGRDLARGTPVNIGEAVGVIAAQSIGEPGTQLTMRTFHIGGAATRGAEQSMVEASRDGIVTIKNRNVVENSQKVLVVMSRNCEILLTDENGVERARYRVPYGARLMVSEGEAVTRTQKMAEWDPYTLPIITEQAGTVEYLDLIDSITLVERMDEVTGLSSKVVVDYKQAAKGVDLRPRLQLKDASGNVVKLANGNDARYFLSPDSILSVENGAEVNAGDVLARIPREGSKTRDITGGLPRVAELFEARRPKDHAIIAEGEGRIEFGKDYKSKRCVIVKNDDTGEETQYLIPKGKHVSVQEGDFVQKGDPLVDGPRVPHDILKVMGVEALSDYLVNEIQDVYRLQGVKINDKHIEVIVRQMLQKVEILEPGDSTYLIGETVDRIEYEGENQRLMENGDTPAKAMPVLQGITKASLQTQSFISAASFQETTRVLTDAATSGKVDTLNGLKENVIVGRLIPAGTGSVMNRLRSIAASQDRQRVGGASPKAVEDAAE</sequence>
<comment type="function">
    <text evidence="1">DNA-dependent RNA polymerase catalyzes the transcription of DNA into RNA using the four ribonucleoside triphosphates as substrates.</text>
</comment>
<comment type="catalytic activity">
    <reaction evidence="1">
        <text>RNA(n) + a ribonucleoside 5'-triphosphate = RNA(n+1) + diphosphate</text>
        <dbReference type="Rhea" id="RHEA:21248"/>
        <dbReference type="Rhea" id="RHEA-COMP:14527"/>
        <dbReference type="Rhea" id="RHEA-COMP:17342"/>
        <dbReference type="ChEBI" id="CHEBI:33019"/>
        <dbReference type="ChEBI" id="CHEBI:61557"/>
        <dbReference type="ChEBI" id="CHEBI:140395"/>
        <dbReference type="EC" id="2.7.7.6"/>
    </reaction>
</comment>
<comment type="cofactor">
    <cofactor evidence="1">
        <name>Mg(2+)</name>
        <dbReference type="ChEBI" id="CHEBI:18420"/>
    </cofactor>
    <text evidence="1">Binds 1 Mg(2+) ion per subunit.</text>
</comment>
<comment type="cofactor">
    <cofactor evidence="1">
        <name>Zn(2+)</name>
        <dbReference type="ChEBI" id="CHEBI:29105"/>
    </cofactor>
    <text evidence="1">Binds 2 Zn(2+) ions per subunit.</text>
</comment>
<comment type="subunit">
    <text evidence="1">The RNAP catalytic core consists of 2 alpha, 1 beta, 1 beta' and 1 omega subunit. When a sigma factor is associated with the core the holoenzyme is formed, which can initiate transcription.</text>
</comment>
<comment type="similarity">
    <text evidence="1">Belongs to the RNA polymerase beta' chain family.</text>
</comment>
<organism>
    <name type="scientific">Gluconobacter oxydans (strain 621H)</name>
    <name type="common">Gluconobacter suboxydans</name>
    <dbReference type="NCBI Taxonomy" id="290633"/>
    <lineage>
        <taxon>Bacteria</taxon>
        <taxon>Pseudomonadati</taxon>
        <taxon>Pseudomonadota</taxon>
        <taxon>Alphaproteobacteria</taxon>
        <taxon>Acetobacterales</taxon>
        <taxon>Acetobacteraceae</taxon>
        <taxon>Gluconobacter</taxon>
    </lineage>
</organism>
<evidence type="ECO:0000255" key="1">
    <source>
        <dbReference type="HAMAP-Rule" id="MF_01322"/>
    </source>
</evidence>